<proteinExistence type="inferred from homology"/>
<dbReference type="EC" id="5.4.99.12" evidence="1"/>
<dbReference type="EMBL" id="CP001129">
    <property type="protein sequence ID" value="ACG63056.1"/>
    <property type="molecule type" value="Genomic_DNA"/>
</dbReference>
<dbReference type="RefSeq" id="WP_012516311.1">
    <property type="nucleotide sequence ID" value="NC_011134.1"/>
</dbReference>
<dbReference type="SMR" id="B4U545"/>
<dbReference type="KEGG" id="sez:Sez_1729"/>
<dbReference type="HOGENOM" id="CLU_014673_0_1_9"/>
<dbReference type="Proteomes" id="UP000001873">
    <property type="component" value="Chromosome"/>
</dbReference>
<dbReference type="GO" id="GO:0003723">
    <property type="term" value="F:RNA binding"/>
    <property type="evidence" value="ECO:0007669"/>
    <property type="project" value="InterPro"/>
</dbReference>
<dbReference type="GO" id="GO:0160147">
    <property type="term" value="F:tRNA pseudouridine(38-40) synthase activity"/>
    <property type="evidence" value="ECO:0007669"/>
    <property type="project" value="UniProtKB-EC"/>
</dbReference>
<dbReference type="GO" id="GO:0031119">
    <property type="term" value="P:tRNA pseudouridine synthesis"/>
    <property type="evidence" value="ECO:0007669"/>
    <property type="project" value="UniProtKB-UniRule"/>
</dbReference>
<dbReference type="CDD" id="cd02570">
    <property type="entry name" value="PseudoU_synth_EcTruA"/>
    <property type="match status" value="1"/>
</dbReference>
<dbReference type="FunFam" id="3.30.70.580:FF:000001">
    <property type="entry name" value="tRNA pseudouridine synthase A"/>
    <property type="match status" value="1"/>
</dbReference>
<dbReference type="Gene3D" id="3.30.70.660">
    <property type="entry name" value="Pseudouridine synthase I, catalytic domain, C-terminal subdomain"/>
    <property type="match status" value="1"/>
</dbReference>
<dbReference type="Gene3D" id="3.30.70.580">
    <property type="entry name" value="Pseudouridine synthase I, catalytic domain, N-terminal subdomain"/>
    <property type="match status" value="1"/>
</dbReference>
<dbReference type="HAMAP" id="MF_00171">
    <property type="entry name" value="TruA"/>
    <property type="match status" value="1"/>
</dbReference>
<dbReference type="InterPro" id="IPR020103">
    <property type="entry name" value="PsdUridine_synth_cat_dom_sf"/>
</dbReference>
<dbReference type="InterPro" id="IPR001406">
    <property type="entry name" value="PsdUridine_synth_TruA"/>
</dbReference>
<dbReference type="InterPro" id="IPR020097">
    <property type="entry name" value="PsdUridine_synth_TruA_a/b_dom"/>
</dbReference>
<dbReference type="InterPro" id="IPR020095">
    <property type="entry name" value="PsdUridine_synth_TruA_C"/>
</dbReference>
<dbReference type="InterPro" id="IPR020094">
    <property type="entry name" value="TruA/RsuA/RluB/E/F_N"/>
</dbReference>
<dbReference type="NCBIfam" id="TIGR00071">
    <property type="entry name" value="hisT_truA"/>
    <property type="match status" value="1"/>
</dbReference>
<dbReference type="PANTHER" id="PTHR11142">
    <property type="entry name" value="PSEUDOURIDYLATE SYNTHASE"/>
    <property type="match status" value="1"/>
</dbReference>
<dbReference type="PANTHER" id="PTHR11142:SF0">
    <property type="entry name" value="TRNA PSEUDOURIDINE SYNTHASE-LIKE 1"/>
    <property type="match status" value="1"/>
</dbReference>
<dbReference type="Pfam" id="PF01416">
    <property type="entry name" value="PseudoU_synth_1"/>
    <property type="match status" value="2"/>
</dbReference>
<dbReference type="PIRSF" id="PIRSF001430">
    <property type="entry name" value="tRNA_psdUrid_synth"/>
    <property type="match status" value="1"/>
</dbReference>
<dbReference type="SUPFAM" id="SSF55120">
    <property type="entry name" value="Pseudouridine synthase"/>
    <property type="match status" value="1"/>
</dbReference>
<name>TRUA_STREM</name>
<keyword id="KW-0413">Isomerase</keyword>
<keyword id="KW-0819">tRNA processing</keyword>
<feature type="chain" id="PRO_1000097787" description="tRNA pseudouridine synthase A">
    <location>
        <begin position="1"/>
        <end position="249"/>
    </location>
</feature>
<feature type="active site" description="Nucleophile" evidence="1">
    <location>
        <position position="53"/>
    </location>
</feature>
<feature type="binding site" evidence="1">
    <location>
        <position position="111"/>
    </location>
    <ligand>
        <name>substrate</name>
    </ligand>
</feature>
<sequence>MTRYKAIISYDGTLFSGFQRQSQARTVQEEIEKTLQKLTGGQGIQIHGAGITDAGVHAYGQVIHFDLEQKRDPEKLRFALDTQTPDDIDVISLEIAADDFHARYHKHFKTYEFLVDIGRPKNPMMRHYATHYPYPLDIAKMQAAIKDLVGTHDFTGFTAAGTSVKNKVRTITAATLTQDPKTGFLVFTFSGNGFLYKQVRNMVGTLLKIGNGRLPIEQIRLVLESKNRQLAGPTAAGNGLYLKEIIYEE</sequence>
<organism>
    <name type="scientific">Streptococcus equi subsp. zooepidemicus (strain MGCS10565)</name>
    <dbReference type="NCBI Taxonomy" id="552526"/>
    <lineage>
        <taxon>Bacteria</taxon>
        <taxon>Bacillati</taxon>
        <taxon>Bacillota</taxon>
        <taxon>Bacilli</taxon>
        <taxon>Lactobacillales</taxon>
        <taxon>Streptococcaceae</taxon>
        <taxon>Streptococcus</taxon>
    </lineage>
</organism>
<evidence type="ECO:0000255" key="1">
    <source>
        <dbReference type="HAMAP-Rule" id="MF_00171"/>
    </source>
</evidence>
<reference key="1">
    <citation type="journal article" date="2008" name="PLoS ONE">
        <title>Genome sequence of a lancefield group C Streptococcus zooepidemicus strain causing epidemic nephritis: new information about an old disease.</title>
        <authorList>
            <person name="Beres S.B."/>
            <person name="Sesso R."/>
            <person name="Pinto S.W.L."/>
            <person name="Hoe N.P."/>
            <person name="Porcella S.F."/>
            <person name="Deleo F.R."/>
            <person name="Musser J.M."/>
        </authorList>
    </citation>
    <scope>NUCLEOTIDE SEQUENCE [LARGE SCALE GENOMIC DNA]</scope>
    <source>
        <strain>MGCS10565</strain>
    </source>
</reference>
<protein>
    <recommendedName>
        <fullName evidence="1">tRNA pseudouridine synthase A</fullName>
        <ecNumber evidence="1">5.4.99.12</ecNumber>
    </recommendedName>
    <alternativeName>
        <fullName evidence="1">tRNA pseudouridine(38-40) synthase</fullName>
    </alternativeName>
    <alternativeName>
        <fullName evidence="1">tRNA pseudouridylate synthase I</fullName>
    </alternativeName>
    <alternativeName>
        <fullName evidence="1">tRNA-uridine isomerase I</fullName>
    </alternativeName>
</protein>
<accession>B4U545</accession>
<comment type="function">
    <text evidence="1">Formation of pseudouridine at positions 38, 39 and 40 in the anticodon stem and loop of transfer RNAs.</text>
</comment>
<comment type="catalytic activity">
    <reaction evidence="1">
        <text>uridine(38/39/40) in tRNA = pseudouridine(38/39/40) in tRNA</text>
        <dbReference type="Rhea" id="RHEA:22376"/>
        <dbReference type="Rhea" id="RHEA-COMP:10085"/>
        <dbReference type="Rhea" id="RHEA-COMP:10087"/>
        <dbReference type="ChEBI" id="CHEBI:65314"/>
        <dbReference type="ChEBI" id="CHEBI:65315"/>
        <dbReference type="EC" id="5.4.99.12"/>
    </reaction>
</comment>
<comment type="subunit">
    <text evidence="1">Homodimer.</text>
</comment>
<comment type="similarity">
    <text evidence="1">Belongs to the tRNA pseudouridine synthase TruA family.</text>
</comment>
<gene>
    <name evidence="1" type="primary">truA</name>
    <name type="ordered locus">Sez_1729</name>
</gene>